<reference evidence="9 10" key="1">
    <citation type="journal article" date="1997" name="Oncogene">
        <title>Wig-1, a new p53-induced gene encoding a zinc finger protein.</title>
        <authorList>
            <person name="Varmeh-Ziaie S."/>
            <person name="Okan I."/>
            <person name="Wang Y."/>
            <person name="Magnusson K.P."/>
            <person name="Warthoe P."/>
            <person name="Strauss M."/>
            <person name="Wiman K.G."/>
        </authorList>
    </citation>
    <scope>NUCLEOTIDE SEQUENCE [MRNA]</scope>
    <scope>TISSUE SPECIFICITY</scope>
    <scope>INDUCTION</scope>
    <source>
        <tissue evidence="10">T-cell lymphoma</tissue>
    </source>
</reference>
<reference evidence="9" key="2">
    <citation type="journal article" date="2002" name="FEBS Lett.">
        <title>Identification of functional p53-binding motifs in the mouse wig-1 promoter.</title>
        <authorList>
            <person name="Wilhelm M.T."/>
            <person name="Mendez-Vidal C."/>
            <person name="Wiman K.G."/>
        </authorList>
    </citation>
    <scope>FUNCTION</scope>
</reference>
<reference evidence="9" key="3">
    <citation type="journal article" date="2007" name="Neurosci. Lett.">
        <title>Suppression of p53-activated gene, PAG608, attenuates methamphetamine-induced neurotoxicity.</title>
        <authorList>
            <person name="Asanuma M."/>
            <person name="Miyazaki I."/>
            <person name="Higashi Y."/>
            <person name="Diaz-Corrales F.J."/>
            <person name="Shimizu M."/>
            <person name="Miyoshi K."/>
            <person name="Ogawa N."/>
        </authorList>
    </citation>
    <scope>INDUCTION</scope>
</reference>
<comment type="function">
    <text evidence="5">Acts as a bona fide target gene of p53/TP53. May play a role in the TP53-dependent growth regulatory pathway. May contribute to TP53-mediated apoptosis by regulation of TP53 expression and translocation to the nucleus and nucleolus.</text>
</comment>
<comment type="subunit">
    <text evidence="2">Interacts with dsRNA.</text>
</comment>
<comment type="subcellular location">
    <subcellularLocation>
        <location evidence="1">Nucleus</location>
    </subcellularLocation>
    <subcellularLocation>
        <location evidence="1">Nucleus</location>
        <location evidence="1">Nucleolus</location>
    </subcellularLocation>
</comment>
<comment type="tissue specificity">
    <text evidence="7">Constitutively expressed in brain and testis. Also expressed in lung, kidney and spleen after whole body gamma irradiation.</text>
</comment>
<comment type="induction">
    <text evidence="6 7">By DNA damage in a p53-dependent manner, and by methamphetamine (METH) in a catecholaminergic cell line.</text>
</comment>
<protein>
    <recommendedName>
        <fullName>Zinc finger matrin-type protein 3</fullName>
    </recommendedName>
    <alternativeName>
        <fullName>Wild-type p53-induced gene 1 protein</fullName>
    </alternativeName>
    <alternativeName>
        <fullName>Zinc finger protein WIG-1</fullName>
    </alternativeName>
    <alternativeName>
        <fullName>p53-activated gene 608 protein</fullName>
    </alternativeName>
</protein>
<accession>O54836</accession>
<keyword id="KW-0053">Apoptosis</keyword>
<keyword id="KW-0227">DNA damage</keyword>
<keyword id="KW-0341">Growth regulation</keyword>
<keyword id="KW-0479">Metal-binding</keyword>
<keyword id="KW-0539">Nucleus</keyword>
<keyword id="KW-0653">Protein transport</keyword>
<keyword id="KW-1185">Reference proteome</keyword>
<keyword id="KW-0677">Repeat</keyword>
<keyword id="KW-0694">RNA-binding</keyword>
<keyword id="KW-0811">Translocation</keyword>
<keyword id="KW-0813">Transport</keyword>
<keyword id="KW-0862">Zinc</keyword>
<keyword id="KW-0863">Zinc-finger</keyword>
<sequence>MILLQQVWLPLPNRPSTSPPMSVAARSTRTLQLPPQKAFGQEASLPLAGEEDLAKRGEPDSALEELCKPLFCKLCNVTLNSAQQAQAHYQGKNHGKKLRNYYAANSCPPPARVSSVVAEPVATPLVPVPPQVGSCKPGGRVILATENDYCKLCDASFSSPAVAQAHYQGKNHAKRLRLAEAQSHSFSDSAEAGQRRTRKEGSEFKMVATRRNMNPVQSNSGPYFNARSRQRIPRDLAMCVTPSGQFYCSMCNVGAGEEVEFRQHLESKQHKSKVSEQRYRSEMENLGYVQ</sequence>
<proteinExistence type="evidence at transcript level"/>
<feature type="chain" id="PRO_0000310780" description="Zinc finger matrin-type protein 3">
    <location>
        <begin position="1"/>
        <end position="290"/>
    </location>
</feature>
<feature type="zinc finger region" description="Matrin-type 1" evidence="3">
    <location>
        <begin position="70"/>
        <end position="100"/>
    </location>
</feature>
<feature type="zinc finger region" description="Matrin-type 2" evidence="3">
    <location>
        <begin position="148"/>
        <end position="178"/>
    </location>
</feature>
<feature type="zinc finger region" description="Matrin-type 3" evidence="3">
    <location>
        <begin position="246"/>
        <end position="276"/>
    </location>
</feature>
<feature type="region of interest" description="Disordered" evidence="4">
    <location>
        <begin position="182"/>
        <end position="203"/>
    </location>
</feature>
<feature type="region of interest" description="Disordered" evidence="4">
    <location>
        <begin position="266"/>
        <end position="290"/>
    </location>
</feature>
<feature type="compositionally biased region" description="Basic and acidic residues" evidence="4">
    <location>
        <begin position="266"/>
        <end position="283"/>
    </location>
</feature>
<gene>
    <name evidence="11" type="primary">Zmat3</name>
    <name evidence="8" type="synonym">Pag608</name>
    <name evidence="11" type="synonym">Wig1</name>
</gene>
<organism>
    <name type="scientific">Mus musculus</name>
    <name type="common">Mouse</name>
    <dbReference type="NCBI Taxonomy" id="10090"/>
    <lineage>
        <taxon>Eukaryota</taxon>
        <taxon>Metazoa</taxon>
        <taxon>Chordata</taxon>
        <taxon>Craniata</taxon>
        <taxon>Vertebrata</taxon>
        <taxon>Euteleostomi</taxon>
        <taxon>Mammalia</taxon>
        <taxon>Eutheria</taxon>
        <taxon>Euarchontoglires</taxon>
        <taxon>Glires</taxon>
        <taxon>Rodentia</taxon>
        <taxon>Myomorpha</taxon>
        <taxon>Muroidea</taxon>
        <taxon>Muridae</taxon>
        <taxon>Murinae</taxon>
        <taxon>Mus</taxon>
        <taxon>Mus</taxon>
    </lineage>
</organism>
<dbReference type="EMBL" id="AF012923">
    <property type="protein sequence ID" value="AAB97673.1"/>
    <property type="molecule type" value="mRNA"/>
</dbReference>
<dbReference type="CCDS" id="CCDS17293.1"/>
<dbReference type="SMR" id="O54836"/>
<dbReference type="FunCoup" id="O54836">
    <property type="interactions" value="417"/>
</dbReference>
<dbReference type="IntAct" id="O54836">
    <property type="interactions" value="1"/>
</dbReference>
<dbReference type="STRING" id="10090.ENSMUSP00000029199"/>
<dbReference type="GlyGen" id="O54836">
    <property type="glycosylation" value="1 site"/>
</dbReference>
<dbReference type="iPTMnet" id="O54836"/>
<dbReference type="PhosphoSitePlus" id="O54836"/>
<dbReference type="PaxDb" id="10090-ENSMUSP00000029199"/>
<dbReference type="ProteomicsDB" id="299563"/>
<dbReference type="Pumba" id="O54836"/>
<dbReference type="AGR" id="MGI:1195270"/>
<dbReference type="MGI" id="MGI:1195270">
    <property type="gene designation" value="Zmat3"/>
</dbReference>
<dbReference type="eggNOG" id="ENOG502QW4K">
    <property type="taxonomic scope" value="Eukaryota"/>
</dbReference>
<dbReference type="InParanoid" id="O54836"/>
<dbReference type="PhylomeDB" id="O54836"/>
<dbReference type="ChiTaRS" id="Zmat3">
    <property type="organism name" value="mouse"/>
</dbReference>
<dbReference type="PRO" id="PR:O54836"/>
<dbReference type="Proteomes" id="UP000000589">
    <property type="component" value="Unplaced"/>
</dbReference>
<dbReference type="RNAct" id="O54836">
    <property type="molecule type" value="protein"/>
</dbReference>
<dbReference type="GO" id="GO:0005730">
    <property type="term" value="C:nucleolus"/>
    <property type="evidence" value="ECO:0007669"/>
    <property type="project" value="UniProtKB-SubCell"/>
</dbReference>
<dbReference type="GO" id="GO:0003723">
    <property type="term" value="F:RNA binding"/>
    <property type="evidence" value="ECO:0007669"/>
    <property type="project" value="UniProtKB-KW"/>
</dbReference>
<dbReference type="GO" id="GO:0008270">
    <property type="term" value="F:zinc ion binding"/>
    <property type="evidence" value="ECO:0007669"/>
    <property type="project" value="UniProtKB-KW"/>
</dbReference>
<dbReference type="GO" id="GO:0006915">
    <property type="term" value="P:apoptotic process"/>
    <property type="evidence" value="ECO:0007669"/>
    <property type="project" value="UniProtKB-KW"/>
</dbReference>
<dbReference type="GO" id="GO:0006974">
    <property type="term" value="P:DNA damage response"/>
    <property type="evidence" value="ECO:0007669"/>
    <property type="project" value="UniProtKB-KW"/>
</dbReference>
<dbReference type="GO" id="GO:0030308">
    <property type="term" value="P:negative regulation of cell growth"/>
    <property type="evidence" value="ECO:0000304"/>
    <property type="project" value="MGI"/>
</dbReference>
<dbReference type="GO" id="GO:0015031">
    <property type="term" value="P:protein transport"/>
    <property type="evidence" value="ECO:0007669"/>
    <property type="project" value="UniProtKB-KW"/>
</dbReference>
<dbReference type="FunFam" id="3.30.160.60:FF:000285">
    <property type="entry name" value="Zinc finger matrin-type protein 3"/>
    <property type="match status" value="2"/>
</dbReference>
<dbReference type="FunFam" id="3.30.160.60:FF:000612">
    <property type="entry name" value="Zinc finger matrin-type protein 3"/>
    <property type="match status" value="1"/>
</dbReference>
<dbReference type="Gene3D" id="3.30.160.60">
    <property type="entry name" value="Classic Zinc Finger"/>
    <property type="match status" value="3"/>
</dbReference>
<dbReference type="InterPro" id="IPR003604">
    <property type="entry name" value="Matrin/U1-like-C_Znf_C2H2"/>
</dbReference>
<dbReference type="InterPro" id="IPR052644">
    <property type="entry name" value="ZMAT3"/>
</dbReference>
<dbReference type="InterPro" id="IPR022755">
    <property type="entry name" value="Znf_C2H2_jaz"/>
</dbReference>
<dbReference type="InterPro" id="IPR036236">
    <property type="entry name" value="Znf_C2H2_sf"/>
</dbReference>
<dbReference type="InterPro" id="IPR013087">
    <property type="entry name" value="Znf_C2H2_type"/>
</dbReference>
<dbReference type="PANTHER" id="PTHR46786">
    <property type="entry name" value="ZINC FINGER MATRIN-TYPE PROTEIN 3"/>
    <property type="match status" value="1"/>
</dbReference>
<dbReference type="PANTHER" id="PTHR46786:SF1">
    <property type="entry name" value="ZINC FINGER MATRIN-TYPE PROTEIN 3"/>
    <property type="match status" value="1"/>
</dbReference>
<dbReference type="Pfam" id="PF12171">
    <property type="entry name" value="zf-C2H2_jaz"/>
    <property type="match status" value="1"/>
</dbReference>
<dbReference type="Pfam" id="PF12874">
    <property type="entry name" value="zf-met"/>
    <property type="match status" value="2"/>
</dbReference>
<dbReference type="SMART" id="SM00355">
    <property type="entry name" value="ZnF_C2H2"/>
    <property type="match status" value="3"/>
</dbReference>
<dbReference type="SMART" id="SM00451">
    <property type="entry name" value="ZnF_U1"/>
    <property type="match status" value="3"/>
</dbReference>
<dbReference type="SUPFAM" id="SSF57667">
    <property type="entry name" value="beta-beta-alpha zinc fingers"/>
    <property type="match status" value="3"/>
</dbReference>
<name>ZMAT3_MOUSE</name>
<evidence type="ECO:0000250" key="1">
    <source>
        <dbReference type="UniProtKB" id="O08781"/>
    </source>
</evidence>
<evidence type="ECO:0000250" key="2">
    <source>
        <dbReference type="UniProtKB" id="Q9HA38"/>
    </source>
</evidence>
<evidence type="ECO:0000255" key="3"/>
<evidence type="ECO:0000256" key="4">
    <source>
        <dbReference type="SAM" id="MobiDB-lite"/>
    </source>
</evidence>
<evidence type="ECO:0000269" key="5">
    <source>
    </source>
</evidence>
<evidence type="ECO:0000269" key="6">
    <source>
    </source>
</evidence>
<evidence type="ECO:0000269" key="7">
    <source>
    </source>
</evidence>
<evidence type="ECO:0000303" key="8">
    <source>
    </source>
</evidence>
<evidence type="ECO:0000305" key="9"/>
<evidence type="ECO:0000312" key="10">
    <source>
        <dbReference type="EMBL" id="AAB97673.1"/>
    </source>
</evidence>
<evidence type="ECO:0000312" key="11">
    <source>
        <dbReference type="MGI" id="MGI:1195270"/>
    </source>
</evidence>